<name>FADI_ECO7I</name>
<comment type="function">
    <text evidence="1">Catalyzes the final step of fatty acid oxidation in which acetyl-CoA is released and the CoA ester of a fatty acid two carbons shorter is formed.</text>
</comment>
<comment type="catalytic activity">
    <reaction evidence="1">
        <text>an acyl-CoA + acetyl-CoA = a 3-oxoacyl-CoA + CoA</text>
        <dbReference type="Rhea" id="RHEA:21564"/>
        <dbReference type="ChEBI" id="CHEBI:57287"/>
        <dbReference type="ChEBI" id="CHEBI:57288"/>
        <dbReference type="ChEBI" id="CHEBI:58342"/>
        <dbReference type="ChEBI" id="CHEBI:90726"/>
        <dbReference type="EC" id="2.3.1.16"/>
    </reaction>
</comment>
<comment type="pathway">
    <text evidence="1">Lipid metabolism; fatty acid beta-oxidation.</text>
</comment>
<comment type="subunit">
    <text evidence="1">Heterotetramer of two alpha chains (FadJ) and two beta chains (FadI).</text>
</comment>
<comment type="subcellular location">
    <subcellularLocation>
        <location evidence="1">Cytoplasm</location>
    </subcellularLocation>
</comment>
<comment type="similarity">
    <text evidence="1">Belongs to the thiolase-like superfamily. Thiolase family.</text>
</comment>
<dbReference type="EC" id="2.3.1.16" evidence="1"/>
<dbReference type="EMBL" id="CU928164">
    <property type="protein sequence ID" value="CAR18619.1"/>
    <property type="molecule type" value="Genomic_DNA"/>
</dbReference>
<dbReference type="RefSeq" id="WP_000531925.1">
    <property type="nucleotide sequence ID" value="NC_011750.1"/>
</dbReference>
<dbReference type="RefSeq" id="YP_002408449.1">
    <property type="nucleotide sequence ID" value="NC_011750.1"/>
</dbReference>
<dbReference type="SMR" id="B7NP25"/>
<dbReference type="STRING" id="585057.ECIAI39_2494"/>
<dbReference type="KEGG" id="ect:ECIAI39_2494"/>
<dbReference type="PATRIC" id="fig|585057.6.peg.2597"/>
<dbReference type="HOGENOM" id="CLU_031026_2_0_6"/>
<dbReference type="UniPathway" id="UPA00659"/>
<dbReference type="Proteomes" id="UP000000749">
    <property type="component" value="Chromosome"/>
</dbReference>
<dbReference type="GO" id="GO:0005829">
    <property type="term" value="C:cytosol"/>
    <property type="evidence" value="ECO:0007669"/>
    <property type="project" value="TreeGrafter"/>
</dbReference>
<dbReference type="GO" id="GO:0003988">
    <property type="term" value="F:acetyl-CoA C-acyltransferase activity"/>
    <property type="evidence" value="ECO:0007669"/>
    <property type="project" value="UniProtKB-UniRule"/>
</dbReference>
<dbReference type="GO" id="GO:0006635">
    <property type="term" value="P:fatty acid beta-oxidation"/>
    <property type="evidence" value="ECO:0007669"/>
    <property type="project" value="UniProtKB-UniRule"/>
</dbReference>
<dbReference type="CDD" id="cd00751">
    <property type="entry name" value="thiolase"/>
    <property type="match status" value="1"/>
</dbReference>
<dbReference type="FunFam" id="3.40.47.10:FF:000011">
    <property type="entry name" value="3-ketoacyl-CoA thiolase"/>
    <property type="match status" value="1"/>
</dbReference>
<dbReference type="Gene3D" id="3.40.47.10">
    <property type="match status" value="1"/>
</dbReference>
<dbReference type="HAMAP" id="MF_01618">
    <property type="entry name" value="FadI"/>
    <property type="match status" value="1"/>
</dbReference>
<dbReference type="InterPro" id="IPR012806">
    <property type="entry name" value="Ac-CoA_C-AcTrfase_FadI"/>
</dbReference>
<dbReference type="InterPro" id="IPR002155">
    <property type="entry name" value="Thiolase"/>
</dbReference>
<dbReference type="InterPro" id="IPR016039">
    <property type="entry name" value="Thiolase-like"/>
</dbReference>
<dbReference type="InterPro" id="IPR020615">
    <property type="entry name" value="Thiolase_acyl_enz_int_AS"/>
</dbReference>
<dbReference type="InterPro" id="IPR020610">
    <property type="entry name" value="Thiolase_AS"/>
</dbReference>
<dbReference type="InterPro" id="IPR020617">
    <property type="entry name" value="Thiolase_C"/>
</dbReference>
<dbReference type="InterPro" id="IPR020613">
    <property type="entry name" value="Thiolase_CS"/>
</dbReference>
<dbReference type="InterPro" id="IPR020616">
    <property type="entry name" value="Thiolase_N"/>
</dbReference>
<dbReference type="NCBIfam" id="TIGR01930">
    <property type="entry name" value="AcCoA-C-Actrans"/>
    <property type="match status" value="1"/>
</dbReference>
<dbReference type="NCBIfam" id="TIGR02446">
    <property type="entry name" value="FadI"/>
    <property type="match status" value="1"/>
</dbReference>
<dbReference type="NCBIfam" id="NF006516">
    <property type="entry name" value="PRK08963.1"/>
    <property type="match status" value="1"/>
</dbReference>
<dbReference type="PANTHER" id="PTHR18919:SF107">
    <property type="entry name" value="ACETYL-COA ACETYLTRANSFERASE, CYTOSOLIC"/>
    <property type="match status" value="1"/>
</dbReference>
<dbReference type="PANTHER" id="PTHR18919">
    <property type="entry name" value="ACETYL-COA C-ACYLTRANSFERASE"/>
    <property type="match status" value="1"/>
</dbReference>
<dbReference type="Pfam" id="PF02803">
    <property type="entry name" value="Thiolase_C"/>
    <property type="match status" value="1"/>
</dbReference>
<dbReference type="Pfam" id="PF00108">
    <property type="entry name" value="Thiolase_N"/>
    <property type="match status" value="1"/>
</dbReference>
<dbReference type="PIRSF" id="PIRSF000429">
    <property type="entry name" value="Ac-CoA_Ac_transf"/>
    <property type="match status" value="1"/>
</dbReference>
<dbReference type="SUPFAM" id="SSF53901">
    <property type="entry name" value="Thiolase-like"/>
    <property type="match status" value="2"/>
</dbReference>
<dbReference type="PROSITE" id="PS00098">
    <property type="entry name" value="THIOLASE_1"/>
    <property type="match status" value="1"/>
</dbReference>
<dbReference type="PROSITE" id="PS00737">
    <property type="entry name" value="THIOLASE_2"/>
    <property type="match status" value="1"/>
</dbReference>
<dbReference type="PROSITE" id="PS00099">
    <property type="entry name" value="THIOLASE_3"/>
    <property type="match status" value="1"/>
</dbReference>
<accession>B7NP25</accession>
<sequence>MGQVLPLVTRQGDRIAIVSGLRTPFARQATAFHGIPAVDLGKMVVGELLARSEIPAEVIEQLVFGQVVQMPEAPNIAREIVLGTGMNVHTDAYSVSRACATSFQAIANVAESLMAGTIRAGIAGGADSSSVLPIGVSKKLARVLVDVNKARTMSQRLKLFSRLRLRDLMPVPPAVAEYSTGLRMGDTAEQMAKTYGITREQQDALAHRSHQRAAQAWSDGKLKEEVMTAFIPPYKQPLVEDNNIRGNSSLADYAKLRPAFDRKHGTVTAANSTPLTDGAAAVILMTESRAKELGLVPLGYLRSYAFTAIDVWQDMLLGPAWSTPLALERAGLTMSDLTLIDMHEAFAAQTLANIQLLGSERFARDVLGRAHATGEVDESKFNVLGGSIAYGHPFAATGARMITQTLHELRRRGGGFGLVTACAAGGLGAAMVVEAE</sequence>
<protein>
    <recommendedName>
        <fullName evidence="1">3-ketoacyl-CoA thiolase</fullName>
        <ecNumber evidence="1">2.3.1.16</ecNumber>
    </recommendedName>
    <alternativeName>
        <fullName evidence="1">ACSs</fullName>
    </alternativeName>
    <alternativeName>
        <fullName evidence="1">Acetyl-CoA acyltransferase</fullName>
    </alternativeName>
    <alternativeName>
        <fullName evidence="1">Acyl-CoA ligase</fullName>
    </alternativeName>
    <alternativeName>
        <fullName evidence="1">Beta-ketothiolase</fullName>
    </alternativeName>
    <alternativeName>
        <fullName evidence="1">Fatty acid oxidation complex subunit beta</fullName>
    </alternativeName>
</protein>
<organism>
    <name type="scientific">Escherichia coli O7:K1 (strain IAI39 / ExPEC)</name>
    <dbReference type="NCBI Taxonomy" id="585057"/>
    <lineage>
        <taxon>Bacteria</taxon>
        <taxon>Pseudomonadati</taxon>
        <taxon>Pseudomonadota</taxon>
        <taxon>Gammaproteobacteria</taxon>
        <taxon>Enterobacterales</taxon>
        <taxon>Enterobacteriaceae</taxon>
        <taxon>Escherichia</taxon>
    </lineage>
</organism>
<proteinExistence type="inferred from homology"/>
<feature type="chain" id="PRO_1000185961" description="3-ketoacyl-CoA thiolase">
    <location>
        <begin position="1"/>
        <end position="436"/>
    </location>
</feature>
<feature type="active site" description="Acyl-thioester intermediate" evidence="1">
    <location>
        <position position="99"/>
    </location>
</feature>
<feature type="active site" description="Proton acceptor" evidence="1">
    <location>
        <position position="392"/>
    </location>
</feature>
<feature type="active site" description="Proton acceptor" evidence="1">
    <location>
        <position position="422"/>
    </location>
</feature>
<gene>
    <name evidence="1" type="primary">fadI</name>
    <name type="ordered locus">ECIAI39_2494</name>
</gene>
<reference key="1">
    <citation type="journal article" date="2009" name="PLoS Genet.">
        <title>Organised genome dynamics in the Escherichia coli species results in highly diverse adaptive paths.</title>
        <authorList>
            <person name="Touchon M."/>
            <person name="Hoede C."/>
            <person name="Tenaillon O."/>
            <person name="Barbe V."/>
            <person name="Baeriswyl S."/>
            <person name="Bidet P."/>
            <person name="Bingen E."/>
            <person name="Bonacorsi S."/>
            <person name="Bouchier C."/>
            <person name="Bouvet O."/>
            <person name="Calteau A."/>
            <person name="Chiapello H."/>
            <person name="Clermont O."/>
            <person name="Cruveiller S."/>
            <person name="Danchin A."/>
            <person name="Diard M."/>
            <person name="Dossat C."/>
            <person name="Karoui M.E."/>
            <person name="Frapy E."/>
            <person name="Garry L."/>
            <person name="Ghigo J.M."/>
            <person name="Gilles A.M."/>
            <person name="Johnson J."/>
            <person name="Le Bouguenec C."/>
            <person name="Lescat M."/>
            <person name="Mangenot S."/>
            <person name="Martinez-Jehanne V."/>
            <person name="Matic I."/>
            <person name="Nassif X."/>
            <person name="Oztas S."/>
            <person name="Petit M.A."/>
            <person name="Pichon C."/>
            <person name="Rouy Z."/>
            <person name="Ruf C.S."/>
            <person name="Schneider D."/>
            <person name="Tourret J."/>
            <person name="Vacherie B."/>
            <person name="Vallenet D."/>
            <person name="Medigue C."/>
            <person name="Rocha E.P.C."/>
            <person name="Denamur E."/>
        </authorList>
    </citation>
    <scope>NUCLEOTIDE SEQUENCE [LARGE SCALE GENOMIC DNA]</scope>
    <source>
        <strain>IAI39 / ExPEC</strain>
    </source>
</reference>
<evidence type="ECO:0000255" key="1">
    <source>
        <dbReference type="HAMAP-Rule" id="MF_01618"/>
    </source>
</evidence>
<keyword id="KW-0012">Acyltransferase</keyword>
<keyword id="KW-0963">Cytoplasm</keyword>
<keyword id="KW-0276">Fatty acid metabolism</keyword>
<keyword id="KW-0442">Lipid degradation</keyword>
<keyword id="KW-0443">Lipid metabolism</keyword>
<keyword id="KW-0808">Transferase</keyword>